<evidence type="ECO:0000250" key="1"/>
<evidence type="ECO:0000305" key="2"/>
<gene>
    <name type="primary">rpsC</name>
    <name type="ordered locus">SACOL2233</name>
</gene>
<accession>Q5HDW4</accession>
<sequence length="217" mass="24114">MGQKINPIGLRVGIIRDWEAKWYAEKDFASLLHEDLKIRKFIDNELKEASVSHVEIERAANRINIAIHTGKPGMVIGKGGSEIEKLRNKLNALTDKKVHINVIEIKKVDLDARLVAENIARQLENRASFRRVQKQAITRAMKLGAKGIKTQISGRLGGADIARAEQYSEGTVPLHTLRADIDYAHAEADTTYGKLGVKVWIYRGEVLPTKNTSGGGK</sequence>
<keyword id="KW-0687">Ribonucleoprotein</keyword>
<keyword id="KW-0689">Ribosomal protein</keyword>
<keyword id="KW-0694">RNA-binding</keyword>
<keyword id="KW-0699">rRNA-binding</keyword>
<name>RS3_STAAC</name>
<proteinExistence type="inferred from homology"/>
<feature type="chain" id="PRO_0000130197" description="Small ribosomal subunit protein uS3">
    <location>
        <begin position="1"/>
        <end position="217"/>
    </location>
</feature>
<feature type="domain" description="KH type-2">
    <location>
        <begin position="38"/>
        <end position="106"/>
    </location>
</feature>
<organism>
    <name type="scientific">Staphylococcus aureus (strain COL)</name>
    <dbReference type="NCBI Taxonomy" id="93062"/>
    <lineage>
        <taxon>Bacteria</taxon>
        <taxon>Bacillati</taxon>
        <taxon>Bacillota</taxon>
        <taxon>Bacilli</taxon>
        <taxon>Bacillales</taxon>
        <taxon>Staphylococcaceae</taxon>
        <taxon>Staphylococcus</taxon>
    </lineage>
</organism>
<comment type="function">
    <text evidence="1">Binds the lower part of the 30S subunit head. Binds mRNA in the 70S ribosome, positioning it for translation (By similarity).</text>
</comment>
<comment type="subunit">
    <text evidence="1">Part of the 30S ribosomal subunit. Forms a tight complex with proteins S10 and S14 (By similarity).</text>
</comment>
<comment type="similarity">
    <text evidence="2">Belongs to the universal ribosomal protein uS3 family.</text>
</comment>
<reference key="1">
    <citation type="journal article" date="2005" name="J. Bacteriol.">
        <title>Insights on evolution of virulence and resistance from the complete genome analysis of an early methicillin-resistant Staphylococcus aureus strain and a biofilm-producing methicillin-resistant Staphylococcus epidermidis strain.</title>
        <authorList>
            <person name="Gill S.R."/>
            <person name="Fouts D.E."/>
            <person name="Archer G.L."/>
            <person name="Mongodin E.F."/>
            <person name="DeBoy R.T."/>
            <person name="Ravel J."/>
            <person name="Paulsen I.T."/>
            <person name="Kolonay J.F."/>
            <person name="Brinkac L.M."/>
            <person name="Beanan M.J."/>
            <person name="Dodson R.J."/>
            <person name="Daugherty S.C."/>
            <person name="Madupu R."/>
            <person name="Angiuoli S.V."/>
            <person name="Durkin A.S."/>
            <person name="Haft D.H."/>
            <person name="Vamathevan J.J."/>
            <person name="Khouri H."/>
            <person name="Utterback T.R."/>
            <person name="Lee C."/>
            <person name="Dimitrov G."/>
            <person name="Jiang L."/>
            <person name="Qin H."/>
            <person name="Weidman J."/>
            <person name="Tran K."/>
            <person name="Kang K.H."/>
            <person name="Hance I.R."/>
            <person name="Nelson K.E."/>
            <person name="Fraser C.M."/>
        </authorList>
    </citation>
    <scope>NUCLEOTIDE SEQUENCE [LARGE SCALE GENOMIC DNA]</scope>
    <source>
        <strain>COL</strain>
    </source>
</reference>
<protein>
    <recommendedName>
        <fullName evidence="2">Small ribosomal subunit protein uS3</fullName>
    </recommendedName>
    <alternativeName>
        <fullName>30S ribosomal protein S3</fullName>
    </alternativeName>
</protein>
<dbReference type="EMBL" id="CP000046">
    <property type="protein sequence ID" value="AAW37108.1"/>
    <property type="molecule type" value="Genomic_DNA"/>
</dbReference>
<dbReference type="RefSeq" id="WP_000529874.1">
    <property type="nucleotide sequence ID" value="NC_002951.2"/>
</dbReference>
<dbReference type="SMR" id="Q5HDW4"/>
<dbReference type="KEGG" id="sac:SACOL2233"/>
<dbReference type="HOGENOM" id="CLU_058591_0_2_9"/>
<dbReference type="Proteomes" id="UP000000530">
    <property type="component" value="Chromosome"/>
</dbReference>
<dbReference type="GO" id="GO:0022627">
    <property type="term" value="C:cytosolic small ribosomal subunit"/>
    <property type="evidence" value="ECO:0007669"/>
    <property type="project" value="TreeGrafter"/>
</dbReference>
<dbReference type="GO" id="GO:0003729">
    <property type="term" value="F:mRNA binding"/>
    <property type="evidence" value="ECO:0007669"/>
    <property type="project" value="UniProtKB-UniRule"/>
</dbReference>
<dbReference type="GO" id="GO:0019843">
    <property type="term" value="F:rRNA binding"/>
    <property type="evidence" value="ECO:0007669"/>
    <property type="project" value="UniProtKB-UniRule"/>
</dbReference>
<dbReference type="GO" id="GO:0003735">
    <property type="term" value="F:structural constituent of ribosome"/>
    <property type="evidence" value="ECO:0007669"/>
    <property type="project" value="InterPro"/>
</dbReference>
<dbReference type="GO" id="GO:0006412">
    <property type="term" value="P:translation"/>
    <property type="evidence" value="ECO:0007669"/>
    <property type="project" value="UniProtKB-UniRule"/>
</dbReference>
<dbReference type="CDD" id="cd02412">
    <property type="entry name" value="KH-II_30S_S3"/>
    <property type="match status" value="1"/>
</dbReference>
<dbReference type="FunFam" id="3.30.1140.32:FF:000001">
    <property type="entry name" value="30S ribosomal protein S3"/>
    <property type="match status" value="1"/>
</dbReference>
<dbReference type="FunFam" id="3.30.300.20:FF:000001">
    <property type="entry name" value="30S ribosomal protein S3"/>
    <property type="match status" value="1"/>
</dbReference>
<dbReference type="Gene3D" id="3.30.300.20">
    <property type="match status" value="1"/>
</dbReference>
<dbReference type="Gene3D" id="3.30.1140.32">
    <property type="entry name" value="Ribosomal protein S3, C-terminal domain"/>
    <property type="match status" value="1"/>
</dbReference>
<dbReference type="HAMAP" id="MF_01309_B">
    <property type="entry name" value="Ribosomal_uS3_B"/>
    <property type="match status" value="1"/>
</dbReference>
<dbReference type="InterPro" id="IPR004087">
    <property type="entry name" value="KH_dom"/>
</dbReference>
<dbReference type="InterPro" id="IPR015946">
    <property type="entry name" value="KH_dom-like_a/b"/>
</dbReference>
<dbReference type="InterPro" id="IPR004044">
    <property type="entry name" value="KH_dom_type_2"/>
</dbReference>
<dbReference type="InterPro" id="IPR009019">
    <property type="entry name" value="KH_sf_prok-type"/>
</dbReference>
<dbReference type="InterPro" id="IPR036419">
    <property type="entry name" value="Ribosomal_S3_C_sf"/>
</dbReference>
<dbReference type="InterPro" id="IPR005704">
    <property type="entry name" value="Ribosomal_uS3_bac-typ"/>
</dbReference>
<dbReference type="InterPro" id="IPR001351">
    <property type="entry name" value="Ribosomal_uS3_C"/>
</dbReference>
<dbReference type="InterPro" id="IPR018280">
    <property type="entry name" value="Ribosomal_uS3_CS"/>
</dbReference>
<dbReference type="NCBIfam" id="TIGR01009">
    <property type="entry name" value="rpsC_bact"/>
    <property type="match status" value="1"/>
</dbReference>
<dbReference type="PANTHER" id="PTHR11760">
    <property type="entry name" value="30S/40S RIBOSOMAL PROTEIN S3"/>
    <property type="match status" value="1"/>
</dbReference>
<dbReference type="PANTHER" id="PTHR11760:SF19">
    <property type="entry name" value="SMALL RIBOSOMAL SUBUNIT PROTEIN US3C"/>
    <property type="match status" value="1"/>
</dbReference>
<dbReference type="Pfam" id="PF07650">
    <property type="entry name" value="KH_2"/>
    <property type="match status" value="1"/>
</dbReference>
<dbReference type="Pfam" id="PF00189">
    <property type="entry name" value="Ribosomal_S3_C"/>
    <property type="match status" value="1"/>
</dbReference>
<dbReference type="SMART" id="SM00322">
    <property type="entry name" value="KH"/>
    <property type="match status" value="1"/>
</dbReference>
<dbReference type="SUPFAM" id="SSF54814">
    <property type="entry name" value="Prokaryotic type KH domain (KH-domain type II)"/>
    <property type="match status" value="1"/>
</dbReference>
<dbReference type="SUPFAM" id="SSF54821">
    <property type="entry name" value="Ribosomal protein S3 C-terminal domain"/>
    <property type="match status" value="1"/>
</dbReference>
<dbReference type="PROSITE" id="PS50823">
    <property type="entry name" value="KH_TYPE_2"/>
    <property type="match status" value="1"/>
</dbReference>
<dbReference type="PROSITE" id="PS00548">
    <property type="entry name" value="RIBOSOMAL_S3"/>
    <property type="match status" value="1"/>
</dbReference>